<organism>
    <name type="scientific">Pseudomonas aeruginosa (strain ATCC 15692 / DSM 22644 / CIP 104116 / JCM 14847 / LMG 12228 / 1C / PRS 101 / PAO1)</name>
    <dbReference type="NCBI Taxonomy" id="208964"/>
    <lineage>
        <taxon>Bacteria</taxon>
        <taxon>Pseudomonadati</taxon>
        <taxon>Pseudomonadota</taxon>
        <taxon>Gammaproteobacteria</taxon>
        <taxon>Pseudomonadales</taxon>
        <taxon>Pseudomonadaceae</taxon>
        <taxon>Pseudomonas</taxon>
    </lineage>
</organism>
<gene>
    <name type="primary">pilU</name>
    <name type="ordered locus">PA0396</name>
</gene>
<reference key="1">
    <citation type="journal article" date="2000" name="Nature">
        <title>Complete genome sequence of Pseudomonas aeruginosa PAO1, an opportunistic pathogen.</title>
        <authorList>
            <person name="Stover C.K."/>
            <person name="Pham X.-Q.T."/>
            <person name="Erwin A.L."/>
            <person name="Mizoguchi S.D."/>
            <person name="Warrener P."/>
            <person name="Hickey M.J."/>
            <person name="Brinkman F.S.L."/>
            <person name="Hufnagle W.O."/>
            <person name="Kowalik D.J."/>
            <person name="Lagrou M."/>
            <person name="Garber R.L."/>
            <person name="Goltry L."/>
            <person name="Tolentino E."/>
            <person name="Westbrock-Wadman S."/>
            <person name="Yuan Y."/>
            <person name="Brody L.L."/>
            <person name="Coulter S.N."/>
            <person name="Folger K.R."/>
            <person name="Kas A."/>
            <person name="Larbig K."/>
            <person name="Lim R.M."/>
            <person name="Smith K.A."/>
            <person name="Spencer D.H."/>
            <person name="Wong G.K.-S."/>
            <person name="Wu Z."/>
            <person name="Paulsen I.T."/>
            <person name="Reizer J."/>
            <person name="Saier M.H. Jr."/>
            <person name="Hancock R.E.W."/>
            <person name="Lory S."/>
            <person name="Olson M.V."/>
        </authorList>
    </citation>
    <scope>NUCLEOTIDE SEQUENCE [LARGE SCALE GENOMIC DNA]</scope>
    <source>
        <strain>ATCC 15692 / DSM 22644 / CIP 104116 / JCM 14847 / LMG 12228 / 1C / PRS 101 / PAO1</strain>
    </source>
</reference>
<reference key="2">
    <citation type="journal article" date="1994" name="Mol. Microbiol.">
        <title>Characterization of a gene, pilU, required for twitching motility but not phage sensitivity in Pseudomonas aeruginosa.</title>
        <authorList>
            <person name="Whitchurch C.B."/>
            <person name="Mattick J.S."/>
        </authorList>
    </citation>
    <scope>FUNCTION</scope>
    <scope>DISRUPTION PHENOTYPE</scope>
</reference>
<reference key="3">
    <citation type="journal article" date="1999" name="Infect. Immun.">
        <title>Pseudomonas aeruginosa gene products PilT and PilU are required for cytotoxicity in vitro and virulence in a mouse model of acute pneumonia.</title>
        <authorList>
            <person name="Comolli J.C."/>
            <person name="Hauser A.R."/>
            <person name="Waite L."/>
            <person name="Whitchurch C.B."/>
            <person name="Mattick J.S."/>
            <person name="Engel J.N."/>
        </authorList>
    </citation>
    <scope>FUNCTION</scope>
    <scope>DISRUPTION PHENOTYPE</scope>
    <source>
        <strain>PAK</strain>
    </source>
</reference>
<reference key="4">
    <citation type="journal article" date="2005" name="J. Bacteriol.">
        <title>Disparate subcellular localization patterns of Pseudomonas aeruginosa Type IV pilus ATPases involved in twitching motility.</title>
        <authorList>
            <person name="Chiang P."/>
            <person name="Habash M."/>
            <person name="Burrows L.L."/>
        </authorList>
    </citation>
    <scope>SUBCELLULAR LOCATION</scope>
    <scope>DOMAIN</scope>
</reference>
<reference key="5">
    <citation type="journal article" date="2008" name="Microbiology">
        <title>Functional role of conserved residues in the characteristic secretion NTPase motifs of the Pseudomonas aeruginosa type IV pilus motor proteins PilB, PilT and PilU.</title>
        <authorList>
            <person name="Chiang P."/>
            <person name="Sampaleanu L.M."/>
            <person name="Ayers M."/>
            <person name="Pahuta M."/>
            <person name="Howell P.L."/>
            <person name="Burrows L.L."/>
        </authorList>
    </citation>
    <scope>FUNCTION</scope>
    <scope>MUTAGENESIS OF GLY-135; GLU-159; ASP-160; GLU-163; GLU-204 AND HIS-229</scope>
</reference>
<reference key="6">
    <citation type="journal article" date="2019" name="PLoS Genet.">
        <title>The type IV pilus protein PilU functions as a PilT-dependent retraction ATPase.</title>
        <authorList>
            <person name="Adams D.W."/>
            <person name="Pereira J.M."/>
            <person name="Stoudmann C."/>
            <person name="Stutzmann S."/>
            <person name="Blokesch M."/>
        </authorList>
    </citation>
    <scope>FUNCTION</scope>
</reference>
<reference key="7">
    <citation type="journal article" date="2019" name="PLoS Genet.">
        <title>PilT and PilU are homohexameric ATPases that coordinate to retract type IVa pili.</title>
        <authorList>
            <person name="Chlebek J.L."/>
            <person name="Hughes H.Q."/>
            <person name="Ratkiewicz A.S."/>
            <person name="Rayyan R."/>
            <person name="Wang J.C."/>
            <person name="Herrin B.E."/>
            <person name="Dalia T.N."/>
            <person name="Biais N."/>
            <person name="Dalia A.B."/>
        </authorList>
    </citation>
    <scope>FUNCTION</scope>
    <scope>SUBUNIT</scope>
</reference>
<name>PILU_PSEAE</name>
<evidence type="ECO:0000250" key="1">
    <source>
        <dbReference type="UniProtKB" id="P24559"/>
    </source>
</evidence>
<evidence type="ECO:0000269" key="2">
    <source>
    </source>
</evidence>
<evidence type="ECO:0000269" key="3">
    <source>
    </source>
</evidence>
<evidence type="ECO:0000269" key="4">
    <source>
    </source>
</evidence>
<evidence type="ECO:0000269" key="5">
    <source>
    </source>
</evidence>
<evidence type="ECO:0000269" key="6">
    <source>
    </source>
</evidence>
<evidence type="ECO:0000269" key="7">
    <source>
    </source>
</evidence>
<evidence type="ECO:0000305" key="8"/>
<evidence type="ECO:0000305" key="9">
    <source>
    </source>
</evidence>
<proteinExistence type="evidence at protein level"/>
<feature type="chain" id="PRO_0000450555" description="Type IV pilus ATPase PilU">
    <location>
        <begin position="1"/>
        <end position="382"/>
    </location>
</feature>
<feature type="binding site" evidence="1">
    <location>
        <begin position="133"/>
        <end position="138"/>
    </location>
    <ligand>
        <name>ATP</name>
        <dbReference type="ChEBI" id="CHEBI:30616"/>
    </ligand>
</feature>
<feature type="mutagenesis site" description="Loss of twitching motility but no change in unipolar localization." evidence="4">
    <original>G</original>
    <variation>S</variation>
    <location>
        <position position="135"/>
    </location>
</feature>
<feature type="mutagenesis site" description="Loss of twitching motility but no change in unipolar localization." evidence="4">
    <original>E</original>
    <variation>Q</variation>
    <location>
        <position position="159"/>
    </location>
</feature>
<feature type="mutagenesis site" description="Loss of twitching motility but no change in unipolar localization." evidence="4">
    <original>D</original>
    <variation>N</variation>
    <location>
        <position position="160"/>
    </location>
</feature>
<feature type="mutagenesis site" description="Loss of twitching motility but no change in unipolar localization." evidence="4">
    <original>E</original>
    <variation>Q</variation>
    <location>
        <position position="163"/>
    </location>
</feature>
<feature type="mutagenesis site" description="Loss of twitching motility but no change in unipolar localization." evidence="4">
    <original>E</original>
    <variation>Q</variation>
    <location>
        <position position="204"/>
    </location>
</feature>
<feature type="mutagenesis site" description="Loss of twitching motility but no change in unipolar localization." evidence="4">
    <original>H</original>
    <variation>A</variation>
    <location>
        <position position="229"/>
    </location>
</feature>
<keyword id="KW-0067">ATP-binding</keyword>
<keyword id="KW-0963">Cytoplasm</keyword>
<keyword id="KW-0547">Nucleotide-binding</keyword>
<keyword id="KW-1185">Reference proteome</keyword>
<dbReference type="EMBL" id="AE004091">
    <property type="protein sequence ID" value="AAG03785.1"/>
    <property type="molecule type" value="Genomic_DNA"/>
</dbReference>
<dbReference type="PIR" id="S54702">
    <property type="entry name" value="S54702"/>
</dbReference>
<dbReference type="RefSeq" id="NP_249087.1">
    <property type="nucleotide sequence ID" value="NC_002516.2"/>
</dbReference>
<dbReference type="RefSeq" id="WP_003100959.1">
    <property type="nucleotide sequence ID" value="NZ_QZGE01000016.1"/>
</dbReference>
<dbReference type="SMR" id="G3XCX3"/>
<dbReference type="STRING" id="208964.PA0396"/>
<dbReference type="PaxDb" id="208964-PA0396"/>
<dbReference type="GeneID" id="878362"/>
<dbReference type="KEGG" id="pae:PA0396"/>
<dbReference type="PATRIC" id="fig|208964.12.peg.417"/>
<dbReference type="PseudoCAP" id="PA0396"/>
<dbReference type="HOGENOM" id="CLU_013446_4_0_6"/>
<dbReference type="InParanoid" id="G3XCX3"/>
<dbReference type="OrthoDB" id="9804785at2"/>
<dbReference type="PhylomeDB" id="G3XCX3"/>
<dbReference type="Proteomes" id="UP000002438">
    <property type="component" value="Chromosome"/>
</dbReference>
<dbReference type="GO" id="GO:0005737">
    <property type="term" value="C:cytoplasm"/>
    <property type="evidence" value="ECO:0007669"/>
    <property type="project" value="UniProtKB-SubCell"/>
</dbReference>
<dbReference type="GO" id="GO:0005524">
    <property type="term" value="F:ATP binding"/>
    <property type="evidence" value="ECO:0007669"/>
    <property type="project" value="UniProtKB-KW"/>
</dbReference>
<dbReference type="GO" id="GO:0016887">
    <property type="term" value="F:ATP hydrolysis activity"/>
    <property type="evidence" value="ECO:0007669"/>
    <property type="project" value="InterPro"/>
</dbReference>
<dbReference type="GO" id="GO:0016888">
    <property type="term" value="F:endodeoxyribonuclease activity, producing 5'-phosphomonoesters"/>
    <property type="evidence" value="ECO:0000314"/>
    <property type="project" value="PseudoCAP"/>
</dbReference>
<dbReference type="GO" id="GO:0043107">
    <property type="term" value="P:type IV pilus-dependent motility"/>
    <property type="evidence" value="ECO:0000315"/>
    <property type="project" value="PseudoCAP"/>
</dbReference>
<dbReference type="CDD" id="cd01131">
    <property type="entry name" value="PilT"/>
    <property type="match status" value="1"/>
</dbReference>
<dbReference type="FunFam" id="3.30.450.90:FF:000004">
    <property type="entry name" value="Type IV pili twitching motility protein PilT"/>
    <property type="match status" value="1"/>
</dbReference>
<dbReference type="FunFam" id="3.40.50.300:FF:001116">
    <property type="entry name" value="Type IV pili twitching motility protein PilT"/>
    <property type="match status" value="1"/>
</dbReference>
<dbReference type="Gene3D" id="3.30.450.90">
    <property type="match status" value="1"/>
</dbReference>
<dbReference type="Gene3D" id="3.40.50.300">
    <property type="entry name" value="P-loop containing nucleotide triphosphate hydrolases"/>
    <property type="match status" value="1"/>
</dbReference>
<dbReference type="InterPro" id="IPR027417">
    <property type="entry name" value="P-loop_NTPase"/>
</dbReference>
<dbReference type="InterPro" id="IPR006321">
    <property type="entry name" value="PilT/PilU"/>
</dbReference>
<dbReference type="InterPro" id="IPR001482">
    <property type="entry name" value="T2SS/T4SS_dom"/>
</dbReference>
<dbReference type="InterPro" id="IPR050921">
    <property type="entry name" value="T4SS_GSP_E_ATPase"/>
</dbReference>
<dbReference type="NCBIfam" id="TIGR01420">
    <property type="entry name" value="pilT_fam"/>
    <property type="match status" value="1"/>
</dbReference>
<dbReference type="PANTHER" id="PTHR30486">
    <property type="entry name" value="TWITCHING MOTILITY PROTEIN PILT"/>
    <property type="match status" value="1"/>
</dbReference>
<dbReference type="PANTHER" id="PTHR30486:SF12">
    <property type="entry name" value="TYPE IV PILUS ATPASE PILU"/>
    <property type="match status" value="1"/>
</dbReference>
<dbReference type="Pfam" id="PF00437">
    <property type="entry name" value="T2SSE"/>
    <property type="match status" value="1"/>
</dbReference>
<dbReference type="SUPFAM" id="SSF52540">
    <property type="entry name" value="P-loop containing nucleoside triphosphate hydrolases"/>
    <property type="match status" value="1"/>
</dbReference>
<comment type="function">
    <text evidence="2 3 4 5 6 7">ATPase component of the type IV pilus (T4P) that plays a role in surface and host cell adhesion, colonization, biofilm maturation, virulence, and twitching, a form of surface-associated motility facilitated by cycles of extension, adhesion, and retraction of T4P fibers (PubMed:10377148, PubMed:15659660, PubMed:18174131, PubMed:7854122). Functions as a PilT-dependent retraction ATPase, providing a functional coupling between PilT and PilU and an optimal mechanism for pilus retraction (PubMed:31525185, PubMed:31626631).</text>
</comment>
<comment type="subunit">
    <text evidence="6 9">Homohexamer (PubMed:31626631). Interacts with PilT (Probable).</text>
</comment>
<comment type="subcellular location">
    <subcellularLocation>
        <location evidence="3">Cytoplasm</location>
    </subcellularLocation>
    <text evidence="3">Localizes only to the piliated pole.</text>
</comment>
<comment type="domain">
    <text evidence="3">The N-terminal region is responsible for proper localization to the piliated pole.</text>
</comment>
<comment type="disruption phenotype">
    <text evidence="2 7">Mutants are hyperfimbriate, retain surface pili but have lost twitching motility (PubMed:7854122). In a mouse model of acute pneumonia, a decreased colonization of the liver is observed but not of the lung relative to the parental strain (PubMed:10377148).</text>
</comment>
<comment type="similarity">
    <text evidence="8">Belongs to the GSP E family.</text>
</comment>
<sequence length="382" mass="42533">MEFEKLLRLMVEKGGSDLFITAGVPPSMKVNGRVMPVTKTPLSPEQTRETVLGVMNEQQRRDFAENHECNFAISARGIGRFRVSAFYQRNLVGMVLRRIETNIPTLEELKLPEILKKLALTKRGLVIFVGATGTGKSTSLAAMIGYRNKNSTGHIISIEDPIEYIHQHQGCIVTQREVGLDTDSFEVALKNTLRQAPDVIMIGEVRSRETMDHAVAFAETGHLCLATLHANNANQALERIIHFFPADRHGQVWMDLSLNLKAIVAQQLVPTPDGKGRRAVIEVLLNTPLAADLIRKGEVHELKPLMKRSTEQGMQTFDQALYQLYTQGEITYEDALAHADSANDLRLMIKLGSESDADHLSSLTQGLSLEITDDDPAGRRFR</sequence>
<accession>G3XCX3</accession>
<protein>
    <recommendedName>
        <fullName>Type IV pilus ATPase PilU</fullName>
    </recommendedName>
</protein>